<accession>Q1QN22</accession>
<comment type="similarity">
    <text evidence="1">Belongs to the universal ribosomal protein uL29 family.</text>
</comment>
<gene>
    <name evidence="1" type="primary">rpmC</name>
    <name type="ordered locus">Nham_1553</name>
</gene>
<keyword id="KW-1185">Reference proteome</keyword>
<keyword id="KW-0687">Ribonucleoprotein</keyword>
<keyword id="KW-0689">Ribosomal protein</keyword>
<dbReference type="EMBL" id="CP000319">
    <property type="protein sequence ID" value="ABE62375.1"/>
    <property type="molecule type" value="Genomic_DNA"/>
</dbReference>
<dbReference type="RefSeq" id="WP_011510062.1">
    <property type="nucleotide sequence ID" value="NC_007964.1"/>
</dbReference>
<dbReference type="SMR" id="Q1QN22"/>
<dbReference type="STRING" id="323097.Nham_1553"/>
<dbReference type="KEGG" id="nha:Nham_1553"/>
<dbReference type="eggNOG" id="COG0255">
    <property type="taxonomic scope" value="Bacteria"/>
</dbReference>
<dbReference type="HOGENOM" id="CLU_158491_1_0_5"/>
<dbReference type="OrthoDB" id="9815192at2"/>
<dbReference type="Proteomes" id="UP000001953">
    <property type="component" value="Chromosome"/>
</dbReference>
<dbReference type="GO" id="GO:0022625">
    <property type="term" value="C:cytosolic large ribosomal subunit"/>
    <property type="evidence" value="ECO:0007669"/>
    <property type="project" value="TreeGrafter"/>
</dbReference>
<dbReference type="GO" id="GO:0003735">
    <property type="term" value="F:structural constituent of ribosome"/>
    <property type="evidence" value="ECO:0007669"/>
    <property type="project" value="InterPro"/>
</dbReference>
<dbReference type="GO" id="GO:0006412">
    <property type="term" value="P:translation"/>
    <property type="evidence" value="ECO:0007669"/>
    <property type="project" value="UniProtKB-UniRule"/>
</dbReference>
<dbReference type="CDD" id="cd00427">
    <property type="entry name" value="Ribosomal_L29_HIP"/>
    <property type="match status" value="1"/>
</dbReference>
<dbReference type="FunFam" id="1.10.287.310:FF:000005">
    <property type="entry name" value="50S ribosomal protein L29"/>
    <property type="match status" value="1"/>
</dbReference>
<dbReference type="Gene3D" id="1.10.287.310">
    <property type="match status" value="1"/>
</dbReference>
<dbReference type="HAMAP" id="MF_00374">
    <property type="entry name" value="Ribosomal_uL29"/>
    <property type="match status" value="1"/>
</dbReference>
<dbReference type="InterPro" id="IPR050063">
    <property type="entry name" value="Ribosomal_protein_uL29"/>
</dbReference>
<dbReference type="InterPro" id="IPR001854">
    <property type="entry name" value="Ribosomal_uL29"/>
</dbReference>
<dbReference type="InterPro" id="IPR018254">
    <property type="entry name" value="Ribosomal_uL29_CS"/>
</dbReference>
<dbReference type="InterPro" id="IPR036049">
    <property type="entry name" value="Ribosomal_uL29_sf"/>
</dbReference>
<dbReference type="NCBIfam" id="TIGR00012">
    <property type="entry name" value="L29"/>
    <property type="match status" value="1"/>
</dbReference>
<dbReference type="PANTHER" id="PTHR10916">
    <property type="entry name" value="60S RIBOSOMAL PROTEIN L35/50S RIBOSOMAL PROTEIN L29"/>
    <property type="match status" value="1"/>
</dbReference>
<dbReference type="PANTHER" id="PTHR10916:SF0">
    <property type="entry name" value="LARGE RIBOSOMAL SUBUNIT PROTEIN UL29C"/>
    <property type="match status" value="1"/>
</dbReference>
<dbReference type="Pfam" id="PF00831">
    <property type="entry name" value="Ribosomal_L29"/>
    <property type="match status" value="1"/>
</dbReference>
<dbReference type="SUPFAM" id="SSF46561">
    <property type="entry name" value="Ribosomal protein L29 (L29p)"/>
    <property type="match status" value="1"/>
</dbReference>
<dbReference type="PROSITE" id="PS00579">
    <property type="entry name" value="RIBOSOMAL_L29"/>
    <property type="match status" value="1"/>
</dbReference>
<organism>
    <name type="scientific">Nitrobacter hamburgensis (strain DSM 10229 / NCIMB 13809 / X14)</name>
    <dbReference type="NCBI Taxonomy" id="323097"/>
    <lineage>
        <taxon>Bacteria</taxon>
        <taxon>Pseudomonadati</taxon>
        <taxon>Pseudomonadota</taxon>
        <taxon>Alphaproteobacteria</taxon>
        <taxon>Hyphomicrobiales</taxon>
        <taxon>Nitrobacteraceae</taxon>
        <taxon>Nitrobacter</taxon>
    </lineage>
</organism>
<protein>
    <recommendedName>
        <fullName evidence="1">Large ribosomal subunit protein uL29</fullName>
    </recommendedName>
    <alternativeName>
        <fullName evidence="2">50S ribosomal protein L29</fullName>
    </alternativeName>
</protein>
<reference key="1">
    <citation type="submission" date="2006-03" db="EMBL/GenBank/DDBJ databases">
        <title>Complete sequence of chromosome of Nitrobacter hamburgensis X14.</title>
        <authorList>
            <consortium name="US DOE Joint Genome Institute"/>
            <person name="Copeland A."/>
            <person name="Lucas S."/>
            <person name="Lapidus A."/>
            <person name="Barry K."/>
            <person name="Detter J.C."/>
            <person name="Glavina del Rio T."/>
            <person name="Hammon N."/>
            <person name="Israni S."/>
            <person name="Dalin E."/>
            <person name="Tice H."/>
            <person name="Pitluck S."/>
            <person name="Chain P."/>
            <person name="Malfatti S."/>
            <person name="Shin M."/>
            <person name="Vergez L."/>
            <person name="Schmutz J."/>
            <person name="Larimer F."/>
            <person name="Land M."/>
            <person name="Hauser L."/>
            <person name="Kyrpides N."/>
            <person name="Ivanova N."/>
            <person name="Ward B."/>
            <person name="Arp D."/>
            <person name="Klotz M."/>
            <person name="Stein L."/>
            <person name="O'Mullan G."/>
            <person name="Starkenburg S."/>
            <person name="Sayavedra L."/>
            <person name="Poret-Peterson A.T."/>
            <person name="Gentry M.E."/>
            <person name="Bruce D."/>
            <person name="Richardson P."/>
        </authorList>
    </citation>
    <scope>NUCLEOTIDE SEQUENCE [LARGE SCALE GENOMIC DNA]</scope>
    <source>
        <strain>DSM 10229 / NCIMB 13809 / X14</strain>
    </source>
</reference>
<name>RL29_NITHX</name>
<evidence type="ECO:0000255" key="1">
    <source>
        <dbReference type="HAMAP-Rule" id="MF_00374"/>
    </source>
</evidence>
<evidence type="ECO:0000305" key="2"/>
<proteinExistence type="inferred from homology"/>
<feature type="chain" id="PRO_1000007540" description="Large ribosomal subunit protein uL29">
    <location>
        <begin position="1"/>
        <end position="68"/>
    </location>
</feature>
<sequence length="68" mass="7853">MAAMKTSDIRAMSPDQMDDAVANLKKERFNLRFQRATGQLENTSRMREARRDIARIKTIAAQKRDAKK</sequence>